<comment type="function">
    <text evidence="4">Sn-1-specific phospholipase A1 that catalyzes the initial step of oxylipins and jasmonate (JA) biosynthesis. Hydrolyzes polyunsaturated acyl groups preferentially from chloroplastic monogalactosyldiacylglycerol (MGDG). May function downstream of abscisic acid (ABA) and provide a link between ABA-mediated abiotic stress responses and oxylipin and JA signalings. In vitro, possesses broad substrate specificity. Can hydrolyze the galactolipids monogalactosyldiacylglycerol (MGDG) and digalactosyldiacylglycerol (DGDG), the sulfolipid sulfoquinovosyldiacylglycerol (SQDG), and the phoshpolipids phosphatidylcholine (PC), and phosphatidylglycerol (PG).</text>
</comment>
<comment type="catalytic activity">
    <reaction evidence="4">
        <text>a 1,2-diacyl-3-O-(beta-D-galactosyl)-sn-glycerol + 2 H2O = 3-beta-D-galactosyl-sn-glycerol + 2 a fatty acid + 2 H(+)</text>
        <dbReference type="Rhea" id="RHEA:13189"/>
        <dbReference type="ChEBI" id="CHEBI:15377"/>
        <dbReference type="ChEBI" id="CHEBI:15378"/>
        <dbReference type="ChEBI" id="CHEBI:15754"/>
        <dbReference type="ChEBI" id="CHEBI:17615"/>
        <dbReference type="ChEBI" id="CHEBI:28868"/>
        <dbReference type="EC" id="3.1.1.26"/>
    </reaction>
    <physiologicalReaction direction="left-to-right" evidence="4">
        <dbReference type="Rhea" id="RHEA:13190"/>
    </physiologicalReaction>
</comment>
<comment type="catalytic activity">
    <reaction evidence="4">
        <text>a 1,2-diacyl-sn-glycero-3-phosphocholine + H2O = a 2-acyl-sn-glycero-3-phosphocholine + a fatty acid + H(+)</text>
        <dbReference type="Rhea" id="RHEA:18689"/>
        <dbReference type="ChEBI" id="CHEBI:15377"/>
        <dbReference type="ChEBI" id="CHEBI:15378"/>
        <dbReference type="ChEBI" id="CHEBI:28868"/>
        <dbReference type="ChEBI" id="CHEBI:57643"/>
        <dbReference type="ChEBI" id="CHEBI:57875"/>
        <dbReference type="EC" id="3.1.1.32"/>
    </reaction>
    <physiologicalReaction direction="left-to-right" evidence="4">
        <dbReference type="Rhea" id="RHEA:18690"/>
    </physiologicalReaction>
</comment>
<comment type="catalytic activity">
    <reaction evidence="4">
        <text>1-hexadecanoyl-2-(9Z-octadecenoyl)-sn-glycero-3-phosphocholine + H2O = 2-(9Z-octadecenoyl)-sn-glycero-3-phosphocholine + hexadecanoate + H(+)</text>
        <dbReference type="Rhea" id="RHEA:38783"/>
        <dbReference type="ChEBI" id="CHEBI:7896"/>
        <dbReference type="ChEBI" id="CHEBI:15377"/>
        <dbReference type="ChEBI" id="CHEBI:15378"/>
        <dbReference type="ChEBI" id="CHEBI:73001"/>
        <dbReference type="ChEBI" id="CHEBI:76071"/>
    </reaction>
    <physiologicalReaction direction="left-to-right" evidence="4">
        <dbReference type="Rhea" id="RHEA:38784"/>
    </physiologicalReaction>
</comment>
<comment type="catalytic activity">
    <reaction evidence="4">
        <text>1,2-di-(9Z-octadecenoyl)-sn-glycero-3-phosphocholine + H2O = 2-(9Z-octadecenoyl)-sn-glycero-3-phosphocholine + (9Z)-octadecenoate + H(+)</text>
        <dbReference type="Rhea" id="RHEA:56448"/>
        <dbReference type="ChEBI" id="CHEBI:15377"/>
        <dbReference type="ChEBI" id="CHEBI:15378"/>
        <dbReference type="ChEBI" id="CHEBI:30823"/>
        <dbReference type="ChEBI" id="CHEBI:74669"/>
        <dbReference type="ChEBI" id="CHEBI:76071"/>
    </reaction>
    <physiologicalReaction direction="left-to-right" evidence="4">
        <dbReference type="Rhea" id="RHEA:56449"/>
    </physiologicalReaction>
</comment>
<comment type="catalytic activity">
    <reaction evidence="4">
        <text>1-octadecanoyl-2-(9Z-octadecenoyl)-sn-glycero-3-phosphocholine + H2O = 2-(9Z-octadecenoyl)-sn-glycero-3-phosphocholine + octadecanoate + H(+)</text>
        <dbReference type="Rhea" id="RHEA:40823"/>
        <dbReference type="ChEBI" id="CHEBI:15377"/>
        <dbReference type="ChEBI" id="CHEBI:15378"/>
        <dbReference type="ChEBI" id="CHEBI:25629"/>
        <dbReference type="ChEBI" id="CHEBI:75034"/>
        <dbReference type="ChEBI" id="CHEBI:76071"/>
    </reaction>
    <physiologicalReaction direction="left-to-right" evidence="4">
        <dbReference type="Rhea" id="RHEA:40824"/>
    </physiologicalReaction>
</comment>
<comment type="catalytic activity">
    <reaction evidence="4">
        <text>1-octadecanoyl-2-(9Z,12Z)-octadecadienoyl-sn-glycero-3-phosphocholine + H2O = 2-(9Z,12Z-octadecadienoyl)-sn-glycero-3-phosphocholine + octadecanoate + H(+)</text>
        <dbReference type="Rhea" id="RHEA:56636"/>
        <dbReference type="ChEBI" id="CHEBI:15377"/>
        <dbReference type="ChEBI" id="CHEBI:15378"/>
        <dbReference type="ChEBI" id="CHEBI:25629"/>
        <dbReference type="ChEBI" id="CHEBI:76084"/>
        <dbReference type="ChEBI" id="CHEBI:84822"/>
    </reaction>
    <physiologicalReaction direction="left-to-right" evidence="4">
        <dbReference type="Rhea" id="RHEA:56637"/>
    </physiologicalReaction>
</comment>
<comment type="catalytic activity">
    <reaction evidence="4">
        <text>1,2-di-(9Z,12Z-octadecadienoyl)-sn-glycero-3-phosphocholine + H2O = 2-(9Z,12Z-octadecadienoyl)-sn-glycero-3-phosphocholine + (9Z,12Z)-octadecadienoate + H(+)</text>
        <dbReference type="Rhea" id="RHEA:56640"/>
        <dbReference type="ChEBI" id="CHEBI:15377"/>
        <dbReference type="ChEBI" id="CHEBI:15378"/>
        <dbReference type="ChEBI" id="CHEBI:30245"/>
        <dbReference type="ChEBI" id="CHEBI:42027"/>
        <dbReference type="ChEBI" id="CHEBI:76084"/>
    </reaction>
    <physiologicalReaction direction="left-to-right" evidence="4">
        <dbReference type="Rhea" id="RHEA:56641"/>
    </physiologicalReaction>
</comment>
<comment type="catalytic activity">
    <reaction evidence="4">
        <text>1-(9Z-octadecenoyl)-2-hexadecanoyl-sn-glycero-3-phosphocholine + H2O = 2-hexadecanoyl-sn-glycero-3-phosphocholine + (9Z)-octadecenoate + H(+)</text>
        <dbReference type="Rhea" id="RHEA:38787"/>
        <dbReference type="ChEBI" id="CHEBI:15377"/>
        <dbReference type="ChEBI" id="CHEBI:15378"/>
        <dbReference type="ChEBI" id="CHEBI:30823"/>
        <dbReference type="ChEBI" id="CHEBI:74667"/>
        <dbReference type="ChEBI" id="CHEBI:76078"/>
    </reaction>
    <physiologicalReaction direction="left-to-right" evidence="4">
        <dbReference type="Rhea" id="RHEA:38788"/>
    </physiologicalReaction>
</comment>
<comment type="subcellular location">
    <subcellularLocation>
        <location evidence="4">Plastid</location>
        <location evidence="4">Chloroplast membrane</location>
        <topology evidence="6">Peripheral membrane protein</topology>
    </subcellularLocation>
    <subcellularLocation>
        <location evidence="4">Plastid</location>
        <location evidence="4">Chloroplast stroma</location>
    </subcellularLocation>
</comment>
<comment type="induction">
    <text evidence="4">Induced by abscisic acid (ABA) and cold stress.</text>
</comment>
<comment type="miscellaneous">
    <text evidence="4">Plants overexpressing PLIP3 exhibit stunted growth and accumulate anthocyanin under normal growth conditions.</text>
</comment>
<comment type="similarity">
    <text evidence="6">Belongs to the AB hydrolase superfamily. Lipase family.</text>
</comment>
<comment type="sequence caution" evidence="6">
    <conflict type="erroneous gene model prediction">
        <sequence resource="EMBL-CDS" id="AAG10634"/>
    </conflict>
</comment>
<protein>
    <recommendedName>
        <fullName evidence="6">Phospholipase A1 PLIP2, chloroplastic</fullName>
        <ecNumber evidence="4">3.1.1.32</ecNumber>
    </recommendedName>
    <alternativeName>
        <fullName evidence="6">Galactolipase PLIP2</fullName>
        <ecNumber evidence="4">3.1.1.26</ecNumber>
    </alternativeName>
    <alternativeName>
        <fullName evidence="5">Protein PLASTID LIPASE 2</fullName>
    </alternativeName>
</protein>
<feature type="transit peptide" description="Chloroplast" evidence="2">
    <location>
        <begin position="1"/>
        <end position="32"/>
    </location>
</feature>
<feature type="chain" id="PRO_0000444794" description="Phospholipase A1 PLIP2, chloroplastic">
    <location>
        <begin position="33"/>
        <end position="713"/>
    </location>
</feature>
<feature type="region of interest" description="Disordered" evidence="3">
    <location>
        <begin position="118"/>
        <end position="140"/>
    </location>
</feature>
<feature type="region of interest" description="Disordered" evidence="3">
    <location>
        <begin position="232"/>
        <end position="261"/>
    </location>
</feature>
<feature type="short sequence motif" description="GXSXG" evidence="1">
    <location>
        <begin position="426"/>
        <end position="430"/>
    </location>
</feature>
<feature type="compositionally biased region" description="Acidic residues" evidence="3">
    <location>
        <begin position="122"/>
        <end position="140"/>
    </location>
</feature>
<feature type="active site" description="Acyl-ester intermediate" evidence="1">
    <location>
        <position position="428"/>
    </location>
</feature>
<feature type="active site" description="Charge relay system" evidence="1">
    <location>
        <position position="489"/>
    </location>
</feature>
<feature type="active site" description="Charge relay system" evidence="1">
    <location>
        <position position="608"/>
    </location>
</feature>
<feature type="mutagenesis site" description="Abolishes lipase activity." evidence="4">
    <original>S</original>
    <variation>A</variation>
    <location>
        <position position="428"/>
    </location>
</feature>
<feature type="sequence conflict" description="In Ref. 3; AAK82508." evidence="6" ref="3">
    <original>A</original>
    <variation>P</variation>
    <location>
        <position position="616"/>
    </location>
</feature>
<feature type="sequence conflict" description="In Ref. 3; AAK82508/AAM98103." evidence="6" ref="3">
    <original>G</original>
    <variation>V</variation>
    <location>
        <position position="653"/>
    </location>
</feature>
<dbReference type="EC" id="3.1.1.32" evidence="4"/>
<dbReference type="EC" id="3.1.1.26" evidence="4"/>
<dbReference type="EMBL" id="AC022521">
    <property type="protein sequence ID" value="AAG10634.1"/>
    <property type="status" value="ALT_SEQ"/>
    <property type="molecule type" value="Genomic_DNA"/>
</dbReference>
<dbReference type="EMBL" id="CP002684">
    <property type="protein sequence ID" value="AEE27455.1"/>
    <property type="molecule type" value="Genomic_DNA"/>
</dbReference>
<dbReference type="EMBL" id="AY048246">
    <property type="protein sequence ID" value="AAK82508.1"/>
    <property type="molecule type" value="mRNA"/>
</dbReference>
<dbReference type="EMBL" id="AY139797">
    <property type="protein sequence ID" value="AAM98103.1"/>
    <property type="molecule type" value="mRNA"/>
</dbReference>
<dbReference type="EMBL" id="AK317736">
    <property type="protein sequence ID" value="BAH20392.1"/>
    <property type="molecule type" value="mRNA"/>
</dbReference>
<dbReference type="PIR" id="F86156">
    <property type="entry name" value="F86156"/>
</dbReference>
<dbReference type="RefSeq" id="NP_563660.1">
    <property type="nucleotide sequence ID" value="NM_100146.3"/>
</dbReference>
<dbReference type="SMR" id="F4HXL0"/>
<dbReference type="FunCoup" id="F4HXL0">
    <property type="interactions" value="233"/>
</dbReference>
<dbReference type="STRING" id="3702.F4HXL0"/>
<dbReference type="SwissLipids" id="SLP:000001917"/>
<dbReference type="ESTHER" id="arath-T14P4.6">
    <property type="family name" value="Lipase_3"/>
</dbReference>
<dbReference type="PaxDb" id="3702-AT1G02660.1"/>
<dbReference type="ProteomicsDB" id="235006"/>
<dbReference type="EnsemblPlants" id="AT1G02660.1">
    <property type="protein sequence ID" value="AT1G02660.1"/>
    <property type="gene ID" value="AT1G02660"/>
</dbReference>
<dbReference type="GeneID" id="839544"/>
<dbReference type="Gramene" id="AT1G02660.1">
    <property type="protein sequence ID" value="AT1G02660.1"/>
    <property type="gene ID" value="AT1G02660"/>
</dbReference>
<dbReference type="KEGG" id="ath:AT1G02660"/>
<dbReference type="Araport" id="AT1G02660"/>
<dbReference type="TAIR" id="AT1G02660">
    <property type="gene designation" value="PLIP2"/>
</dbReference>
<dbReference type="eggNOG" id="ENOG502QU4P">
    <property type="taxonomic scope" value="Eukaryota"/>
</dbReference>
<dbReference type="HOGENOM" id="CLU_016443_0_0_1"/>
<dbReference type="InParanoid" id="F4HXL0"/>
<dbReference type="OMA" id="VCYEENK"/>
<dbReference type="PRO" id="PR:F4HXL0"/>
<dbReference type="Proteomes" id="UP000006548">
    <property type="component" value="Chromosome 1"/>
</dbReference>
<dbReference type="ExpressionAtlas" id="F4HXL0">
    <property type="expression patterns" value="baseline and differential"/>
</dbReference>
<dbReference type="GO" id="GO:0009507">
    <property type="term" value="C:chloroplast"/>
    <property type="evidence" value="ECO:0000314"/>
    <property type="project" value="TAIR"/>
</dbReference>
<dbReference type="GO" id="GO:0031969">
    <property type="term" value="C:chloroplast membrane"/>
    <property type="evidence" value="ECO:0007669"/>
    <property type="project" value="UniProtKB-SubCell"/>
</dbReference>
<dbReference type="GO" id="GO:0009570">
    <property type="term" value="C:chloroplast stroma"/>
    <property type="evidence" value="ECO:0007669"/>
    <property type="project" value="UniProtKB-SubCell"/>
</dbReference>
<dbReference type="GO" id="GO:0047714">
    <property type="term" value="F:galactolipase activity"/>
    <property type="evidence" value="ECO:0000314"/>
    <property type="project" value="TAIR"/>
</dbReference>
<dbReference type="GO" id="GO:0008970">
    <property type="term" value="F:phospholipase A1 activity"/>
    <property type="evidence" value="ECO:0007669"/>
    <property type="project" value="UniProtKB-EC"/>
</dbReference>
<dbReference type="GO" id="GO:0002213">
    <property type="term" value="P:defense response to insect"/>
    <property type="evidence" value="ECO:0000315"/>
    <property type="project" value="TAIR"/>
</dbReference>
<dbReference type="GO" id="GO:0016042">
    <property type="term" value="P:lipid catabolic process"/>
    <property type="evidence" value="ECO:0007669"/>
    <property type="project" value="UniProtKB-KW"/>
</dbReference>
<dbReference type="GO" id="GO:0031349">
    <property type="term" value="P:positive regulation of defense response"/>
    <property type="evidence" value="ECO:0000315"/>
    <property type="project" value="TAIR"/>
</dbReference>
<dbReference type="CDD" id="cd00519">
    <property type="entry name" value="Lipase_3"/>
    <property type="match status" value="1"/>
</dbReference>
<dbReference type="FunFam" id="3.40.50.1820:FF:000254">
    <property type="entry name" value="Phospholipase A1 PLIP3, chloroplastic"/>
    <property type="match status" value="1"/>
</dbReference>
<dbReference type="Gene3D" id="3.40.50.1820">
    <property type="entry name" value="alpha/beta hydrolase"/>
    <property type="match status" value="1"/>
</dbReference>
<dbReference type="InterPro" id="IPR029058">
    <property type="entry name" value="AB_hydrolase_fold"/>
</dbReference>
<dbReference type="InterPro" id="IPR002921">
    <property type="entry name" value="Fungal_lipase-type"/>
</dbReference>
<dbReference type="InterPro" id="IPR043367">
    <property type="entry name" value="PLIP1/2/3"/>
</dbReference>
<dbReference type="PANTHER" id="PTHR46483">
    <property type="entry name" value="PHOSPHOLIPASE A1 PLIP2, CHLOROPLASTIC"/>
    <property type="match status" value="1"/>
</dbReference>
<dbReference type="PANTHER" id="PTHR46483:SF4">
    <property type="entry name" value="PHOSPHOLIPASE A1 PLIP2, CHLOROPLASTIC"/>
    <property type="match status" value="1"/>
</dbReference>
<dbReference type="Pfam" id="PF01764">
    <property type="entry name" value="Lipase_3"/>
    <property type="match status" value="1"/>
</dbReference>
<dbReference type="SUPFAM" id="SSF53474">
    <property type="entry name" value="alpha/beta-Hydrolases"/>
    <property type="match status" value="1"/>
</dbReference>
<organism>
    <name type="scientific">Arabidopsis thaliana</name>
    <name type="common">Mouse-ear cress</name>
    <dbReference type="NCBI Taxonomy" id="3702"/>
    <lineage>
        <taxon>Eukaryota</taxon>
        <taxon>Viridiplantae</taxon>
        <taxon>Streptophyta</taxon>
        <taxon>Embryophyta</taxon>
        <taxon>Tracheophyta</taxon>
        <taxon>Spermatophyta</taxon>
        <taxon>Magnoliopsida</taxon>
        <taxon>eudicotyledons</taxon>
        <taxon>Gunneridae</taxon>
        <taxon>Pentapetalae</taxon>
        <taxon>rosids</taxon>
        <taxon>malvids</taxon>
        <taxon>Brassicales</taxon>
        <taxon>Brassicaceae</taxon>
        <taxon>Camelineae</taxon>
        <taxon>Arabidopsis</taxon>
    </lineage>
</organism>
<gene>
    <name evidence="5" type="primary">PLIP2</name>
    <name evidence="7" type="ordered locus">At1g02660</name>
    <name evidence="8" type="ORF">T14P4.6</name>
</gene>
<evidence type="ECO:0000250" key="1">
    <source>
        <dbReference type="UniProtKB" id="Q948R1"/>
    </source>
</evidence>
<evidence type="ECO:0000255" key="2"/>
<evidence type="ECO:0000256" key="3">
    <source>
        <dbReference type="SAM" id="MobiDB-lite"/>
    </source>
</evidence>
<evidence type="ECO:0000269" key="4">
    <source>
    </source>
</evidence>
<evidence type="ECO:0000303" key="5">
    <source>
    </source>
</evidence>
<evidence type="ECO:0000305" key="6"/>
<evidence type="ECO:0000312" key="7">
    <source>
        <dbReference type="Araport" id="AT1G02660"/>
    </source>
</evidence>
<evidence type="ECO:0000312" key="8">
    <source>
        <dbReference type="EMBL" id="AAG10634.1"/>
    </source>
</evidence>
<sequence>MDSLCLNSGLHGVIPAITAVGNGGCGGVVEVRATASAPSQKRGPFGFSFKYPLTPFWSRGGGGGIASRRRSGLCLDDAVLVDSGDSRKPIAEETAVEMDTERRNGSWVLKILDVQSTWKHEEEEDDDEVEDEDGDEDEEVELDDAVVSEDDGGCDVCSVLEDDGNEANKFQLDRESFSKLLRRVTLPESKLYAQLSYLGNLAYSISKIKPANLSKYYGLRFVTSSAEKTESALKAENGEVSGETKPIVEAEEEVEEEEKNKSRKISASAAYEIVASAASYLHSRTNNILPFNSSSKAENSDKHDVNLTNAESSSDVAYSVTSVVAAEEDVKQAVADDLKSTISSPCDWFICDDDQSHTRFVVIQGSESLASWQANLLFEPIEFEGLGAIVHRGIYEAAKGMYEQMLPEVKAHIKTHGTSAKFRFTGHSLGGSLSLLLNLMLLVRGEVPASSLLPVITYGAPFVLCGGDRLLKKLGLPKSHVQAIVMHRDIVPRAFSCNYPYHVAELLKAVNGNFRSHPCLNKQSMLYSPMGELLILQPDETFSPGHELLPSGNGLYLLTSDFESPDIEDSDEERLRAAQTVFLNTPHPLDILSDRSAYGSSGTIQRDHDMNSYLKAVRSVIRKEVNQIRRAKREHRRSLWWPILVARESGSSGIAVSNGQINGQDFSGMMQTGRKSLQRFSRLVASQHMPLIVVMLFPVKLLFLGAFNVFSFR</sequence>
<keyword id="KW-0150">Chloroplast</keyword>
<keyword id="KW-0378">Hydrolase</keyword>
<keyword id="KW-0442">Lipid degradation</keyword>
<keyword id="KW-0443">Lipid metabolism</keyword>
<keyword id="KW-0472">Membrane</keyword>
<keyword id="KW-0934">Plastid</keyword>
<keyword id="KW-1185">Reference proteome</keyword>
<keyword id="KW-0809">Transit peptide</keyword>
<proteinExistence type="evidence at protein level"/>
<name>PLIP2_ARATH</name>
<accession>F4HXL0</accession>
<accession>B9DI25</accession>
<accession>Q8L739</accession>
<accession>Q94AE2</accession>
<accession>Q9FWY4</accession>
<reference key="1">
    <citation type="journal article" date="2000" name="Nature">
        <title>Sequence and analysis of chromosome 1 of the plant Arabidopsis thaliana.</title>
        <authorList>
            <person name="Theologis A."/>
            <person name="Ecker J.R."/>
            <person name="Palm C.J."/>
            <person name="Federspiel N.A."/>
            <person name="Kaul S."/>
            <person name="White O."/>
            <person name="Alonso J."/>
            <person name="Altafi H."/>
            <person name="Araujo R."/>
            <person name="Bowman C.L."/>
            <person name="Brooks S.Y."/>
            <person name="Buehler E."/>
            <person name="Chan A."/>
            <person name="Chao Q."/>
            <person name="Chen H."/>
            <person name="Cheuk R.F."/>
            <person name="Chin C.W."/>
            <person name="Chung M.K."/>
            <person name="Conn L."/>
            <person name="Conway A.B."/>
            <person name="Conway A.R."/>
            <person name="Creasy T.H."/>
            <person name="Dewar K."/>
            <person name="Dunn P."/>
            <person name="Etgu P."/>
            <person name="Feldblyum T.V."/>
            <person name="Feng J.-D."/>
            <person name="Fong B."/>
            <person name="Fujii C.Y."/>
            <person name="Gill J.E."/>
            <person name="Goldsmith A.D."/>
            <person name="Haas B."/>
            <person name="Hansen N.F."/>
            <person name="Hughes B."/>
            <person name="Huizar L."/>
            <person name="Hunter J.L."/>
            <person name="Jenkins J."/>
            <person name="Johnson-Hopson C."/>
            <person name="Khan S."/>
            <person name="Khaykin E."/>
            <person name="Kim C.J."/>
            <person name="Koo H.L."/>
            <person name="Kremenetskaia I."/>
            <person name="Kurtz D.B."/>
            <person name="Kwan A."/>
            <person name="Lam B."/>
            <person name="Langin-Hooper S."/>
            <person name="Lee A."/>
            <person name="Lee J.M."/>
            <person name="Lenz C.A."/>
            <person name="Li J.H."/>
            <person name="Li Y.-P."/>
            <person name="Lin X."/>
            <person name="Liu S.X."/>
            <person name="Liu Z.A."/>
            <person name="Luros J.S."/>
            <person name="Maiti R."/>
            <person name="Marziali A."/>
            <person name="Militscher J."/>
            <person name="Miranda M."/>
            <person name="Nguyen M."/>
            <person name="Nierman W.C."/>
            <person name="Osborne B.I."/>
            <person name="Pai G."/>
            <person name="Peterson J."/>
            <person name="Pham P.K."/>
            <person name="Rizzo M."/>
            <person name="Rooney T."/>
            <person name="Rowley D."/>
            <person name="Sakano H."/>
            <person name="Salzberg S.L."/>
            <person name="Schwartz J.R."/>
            <person name="Shinn P."/>
            <person name="Southwick A.M."/>
            <person name="Sun H."/>
            <person name="Tallon L.J."/>
            <person name="Tambunga G."/>
            <person name="Toriumi M.J."/>
            <person name="Town C.D."/>
            <person name="Utterback T."/>
            <person name="Van Aken S."/>
            <person name="Vaysberg M."/>
            <person name="Vysotskaia V.S."/>
            <person name="Walker M."/>
            <person name="Wu D."/>
            <person name="Yu G."/>
            <person name="Fraser C.M."/>
            <person name="Venter J.C."/>
            <person name="Davis R.W."/>
        </authorList>
    </citation>
    <scope>NUCLEOTIDE SEQUENCE [LARGE SCALE GENOMIC DNA]</scope>
    <source>
        <strain>cv. Columbia</strain>
    </source>
</reference>
<reference key="2">
    <citation type="journal article" date="2017" name="Plant J.">
        <title>Araport11: a complete reannotation of the Arabidopsis thaliana reference genome.</title>
        <authorList>
            <person name="Cheng C.Y."/>
            <person name="Krishnakumar V."/>
            <person name="Chan A.P."/>
            <person name="Thibaud-Nissen F."/>
            <person name="Schobel S."/>
            <person name="Town C.D."/>
        </authorList>
    </citation>
    <scope>GENOME REANNOTATION</scope>
    <source>
        <strain>cv. Columbia</strain>
    </source>
</reference>
<reference key="3">
    <citation type="journal article" date="2003" name="Science">
        <title>Empirical analysis of transcriptional activity in the Arabidopsis genome.</title>
        <authorList>
            <person name="Yamada K."/>
            <person name="Lim J."/>
            <person name="Dale J.M."/>
            <person name="Chen H."/>
            <person name="Shinn P."/>
            <person name="Palm C.J."/>
            <person name="Southwick A.M."/>
            <person name="Wu H.C."/>
            <person name="Kim C.J."/>
            <person name="Nguyen M."/>
            <person name="Pham P.K."/>
            <person name="Cheuk R.F."/>
            <person name="Karlin-Newmann G."/>
            <person name="Liu S.X."/>
            <person name="Lam B."/>
            <person name="Sakano H."/>
            <person name="Wu T."/>
            <person name="Yu G."/>
            <person name="Miranda M."/>
            <person name="Quach H.L."/>
            <person name="Tripp M."/>
            <person name="Chang C.H."/>
            <person name="Lee J.M."/>
            <person name="Toriumi M.J."/>
            <person name="Chan M.M."/>
            <person name="Tang C.C."/>
            <person name="Onodera C.S."/>
            <person name="Deng J.M."/>
            <person name="Akiyama K."/>
            <person name="Ansari Y."/>
            <person name="Arakawa T."/>
            <person name="Banh J."/>
            <person name="Banno F."/>
            <person name="Bowser L."/>
            <person name="Brooks S.Y."/>
            <person name="Carninci P."/>
            <person name="Chao Q."/>
            <person name="Choy N."/>
            <person name="Enju A."/>
            <person name="Goldsmith A.D."/>
            <person name="Gurjal M."/>
            <person name="Hansen N.F."/>
            <person name="Hayashizaki Y."/>
            <person name="Johnson-Hopson C."/>
            <person name="Hsuan V.W."/>
            <person name="Iida K."/>
            <person name="Karnes M."/>
            <person name="Khan S."/>
            <person name="Koesema E."/>
            <person name="Ishida J."/>
            <person name="Jiang P.X."/>
            <person name="Jones T."/>
            <person name="Kawai J."/>
            <person name="Kamiya A."/>
            <person name="Meyers C."/>
            <person name="Nakajima M."/>
            <person name="Narusaka M."/>
            <person name="Seki M."/>
            <person name="Sakurai T."/>
            <person name="Satou M."/>
            <person name="Tamse R."/>
            <person name="Vaysberg M."/>
            <person name="Wallender E.K."/>
            <person name="Wong C."/>
            <person name="Yamamura Y."/>
            <person name="Yuan S."/>
            <person name="Shinozaki K."/>
            <person name="Davis R.W."/>
            <person name="Theologis A."/>
            <person name="Ecker J.R."/>
        </authorList>
    </citation>
    <scope>NUCLEOTIDE SEQUENCE [LARGE SCALE MRNA]</scope>
    <source>
        <strain>cv. Columbia</strain>
    </source>
</reference>
<reference key="4">
    <citation type="journal article" date="2009" name="DNA Res.">
        <title>Analysis of multiple occurrences of alternative splicing events in Arabidopsis thaliana using novel sequenced full-length cDNAs.</title>
        <authorList>
            <person name="Iida K."/>
            <person name="Fukami-Kobayashi K."/>
            <person name="Toyoda A."/>
            <person name="Sakaki Y."/>
            <person name="Kobayashi M."/>
            <person name="Seki M."/>
            <person name="Shinozaki K."/>
        </authorList>
    </citation>
    <scope>NUCLEOTIDE SEQUENCE [LARGE SCALE MRNA] OF 164-713</scope>
    <source>
        <strain>cv. Columbia</strain>
    </source>
</reference>
<reference key="5">
    <citation type="journal article" date="2018" name="Plant Cell">
        <title>Two abscisic acid responsive plastid lipase genes involved in jasmonic acid biosynthesis in Arabidopsis thaliana.</title>
        <authorList>
            <person name="Wang K."/>
            <person name="Guo Q."/>
            <person name="Froehlich J.E."/>
            <person name="Hersh H.L."/>
            <person name="Zienkiewicz A."/>
            <person name="Howe G.A."/>
            <person name="Benning C."/>
        </authorList>
    </citation>
    <scope>FUNCTION</scope>
    <scope>CATALYTIC ACTIVITY</scope>
    <scope>SUBCELLULAR LOCATION</scope>
    <scope>INDUCTION</scope>
    <scope>MUTAGENESIS OF SER-428</scope>
</reference>